<proteinExistence type="inferred from homology"/>
<keyword id="KW-0378">Hydrolase</keyword>
<keyword id="KW-0460">Magnesium</keyword>
<keyword id="KW-0479">Metal-binding</keyword>
<keyword id="KW-0574">Periplasm</keyword>
<keyword id="KW-0732">Signal</keyword>
<gene>
    <name evidence="1" type="primary">aphA</name>
    <name type="ordered locus">Rahaq_3102</name>
</gene>
<feature type="signal peptide" evidence="2">
    <location>
        <begin position="1"/>
        <end position="23"/>
    </location>
</feature>
<feature type="chain" id="PRO_5000703176" description="Class B acid phosphatase" evidence="2">
    <location>
        <begin position="24"/>
        <end position="237"/>
    </location>
</feature>
<feature type="active site" description="Nucleophile" evidence="1">
    <location>
        <position position="69"/>
    </location>
</feature>
<feature type="active site" description="Proton donor" evidence="1">
    <location>
        <position position="71"/>
    </location>
</feature>
<feature type="binding site" evidence="1">
    <location>
        <position position="69"/>
    </location>
    <ligand>
        <name>Mg(2+)</name>
        <dbReference type="ChEBI" id="CHEBI:18420"/>
    </ligand>
</feature>
<feature type="binding site" evidence="1">
    <location>
        <position position="71"/>
    </location>
    <ligand>
        <name>Mg(2+)</name>
        <dbReference type="ChEBI" id="CHEBI:18420"/>
    </ligand>
</feature>
<feature type="binding site" evidence="1">
    <location>
        <begin position="137"/>
        <end position="138"/>
    </location>
    <ligand>
        <name>substrate</name>
    </ligand>
</feature>
<feature type="binding site" evidence="1">
    <location>
        <position position="177"/>
    </location>
    <ligand>
        <name>substrate</name>
    </ligand>
</feature>
<feature type="binding site" evidence="1">
    <location>
        <position position="192"/>
    </location>
    <ligand>
        <name>Mg(2+)</name>
        <dbReference type="ChEBI" id="CHEBI:18420"/>
    </ligand>
</feature>
<evidence type="ECO:0000250" key="1">
    <source>
        <dbReference type="UniProtKB" id="P0AE22"/>
    </source>
</evidence>
<evidence type="ECO:0000255" key="2"/>
<evidence type="ECO:0000305" key="3"/>
<evidence type="ECO:0000312" key="4">
    <source>
        <dbReference type="EMBL" id="ADW74696.1"/>
    </source>
</evidence>
<accession>E8XMF0</accession>
<reference evidence="4" key="1">
    <citation type="submission" date="2011-01" db="EMBL/GenBank/DDBJ databases">
        <title>Complete sequence of chromosome of Rahnella sp. Y9602.</title>
        <authorList>
            <consortium name="US DOE Joint Genome Institute"/>
            <person name="Lucas S."/>
            <person name="Copeland A."/>
            <person name="Lapidus A."/>
            <person name="Cheng J.-F."/>
            <person name="Goodwin L."/>
            <person name="Pitluck S."/>
            <person name="Lu M."/>
            <person name="Detter J.C."/>
            <person name="Han C."/>
            <person name="Tapia R."/>
            <person name="Land M."/>
            <person name="Hauser L."/>
            <person name="Kyrpides N."/>
            <person name="Ivanova N."/>
            <person name="Ovchinnikova G."/>
            <person name="Pagani I."/>
            <person name="Sobecky P.A."/>
            <person name="Martinez R.J."/>
            <person name="Woyke T."/>
        </authorList>
    </citation>
    <scope>NUCLEOTIDE SEQUENCE [LARGE SCALE GENOMIC DNA]</scope>
    <source>
        <strain evidence="4">Y9602</strain>
    </source>
</reference>
<sequence>MRKTPLALSAVFLLLSLNQSAFAKEPAPAPLWPGVNVAQLAQQSPVHWVSVAQIENSLNGRPPIAVGFDIDDTVLFSSPGFYRGQVEFSPGKQDYLKNPKFWEKMNNGWDDFSMPKEVAKSLIAMHLKRGDSIYFVTGRSETKTETVTKTLQNDFQIPQDKVNAVIFAGDKAGQNTKTQWLKDKQIKVFYGDSDNDITAAQSVSARGIRVLRASNSSYKPLPQAGAFGEEVIVNSEY</sequence>
<name>APHA_RAHSY</name>
<organism>
    <name type="scientific">Rahnella sp. (strain Y9602)</name>
    <dbReference type="NCBI Taxonomy" id="2703885"/>
    <lineage>
        <taxon>Bacteria</taxon>
        <taxon>Pseudomonadati</taxon>
        <taxon>Pseudomonadota</taxon>
        <taxon>Gammaproteobacteria</taxon>
        <taxon>Enterobacterales</taxon>
        <taxon>Yersiniaceae</taxon>
        <taxon>Rahnella</taxon>
    </lineage>
</organism>
<comment type="function">
    <text evidence="1">Dephosphorylates several organic phosphate monoesters. Also has a phosphotransferase activity catalyzing the transfer of low-energy phosphate groups from organic phosphate monoesters to free hydroxyl groups of various organic compounds (By similarity).</text>
</comment>
<comment type="catalytic activity">
    <reaction evidence="1">
        <text>a phosphate monoester + H2O = an alcohol + phosphate</text>
        <dbReference type="Rhea" id="RHEA:15017"/>
        <dbReference type="ChEBI" id="CHEBI:15377"/>
        <dbReference type="ChEBI" id="CHEBI:30879"/>
        <dbReference type="ChEBI" id="CHEBI:43474"/>
        <dbReference type="ChEBI" id="CHEBI:67140"/>
        <dbReference type="EC" id="3.1.3.2"/>
    </reaction>
</comment>
<comment type="cofactor">
    <cofactor evidence="1">
        <name>Mg(2+)</name>
        <dbReference type="ChEBI" id="CHEBI:18420"/>
    </cofactor>
    <text evidence="1">Binds 1 Mg(2+) ion per subunit.</text>
</comment>
<comment type="subunit">
    <text evidence="1">Homotetramer.</text>
</comment>
<comment type="subcellular location">
    <subcellularLocation>
        <location evidence="1">Periplasm</location>
    </subcellularLocation>
</comment>
<comment type="similarity">
    <text evidence="1">Belongs to the class B bacterial acid phosphatase family.</text>
</comment>
<comment type="sequence caution" evidence="3">
    <conflict type="erroneous initiation">
        <sequence resource="EMBL-CDS" id="ADW74696"/>
    </conflict>
    <text>Extended N-terminus.</text>
</comment>
<protein>
    <recommendedName>
        <fullName evidence="1">Class B acid phosphatase</fullName>
        <shortName evidence="1">CBAP</shortName>
        <ecNumber evidence="1 4">3.1.3.2</ecNumber>
    </recommendedName>
</protein>
<dbReference type="EC" id="3.1.3.2" evidence="1 4"/>
<dbReference type="EMBL" id="CP002505">
    <property type="protein sequence ID" value="ADW74696.1"/>
    <property type="status" value="ALT_INIT"/>
    <property type="molecule type" value="Genomic_DNA"/>
</dbReference>
<dbReference type="RefSeq" id="WP_015690236.1">
    <property type="nucleotide sequence ID" value="NC_015061.1"/>
</dbReference>
<dbReference type="SMR" id="E8XMF0"/>
<dbReference type="GeneID" id="95416322"/>
<dbReference type="KEGG" id="rah:Rahaq_3102"/>
<dbReference type="eggNOG" id="COG3700">
    <property type="taxonomic scope" value="Bacteria"/>
</dbReference>
<dbReference type="HOGENOM" id="CLU_081496_0_0_6"/>
<dbReference type="OrthoDB" id="2234478at2"/>
<dbReference type="Proteomes" id="UP000007257">
    <property type="component" value="Chromosome"/>
</dbReference>
<dbReference type="GO" id="GO:0030288">
    <property type="term" value="C:outer membrane-bounded periplasmic space"/>
    <property type="evidence" value="ECO:0007669"/>
    <property type="project" value="InterPro"/>
</dbReference>
<dbReference type="GO" id="GO:0003993">
    <property type="term" value="F:acid phosphatase activity"/>
    <property type="evidence" value="ECO:0007669"/>
    <property type="project" value="UniProtKB-EC"/>
</dbReference>
<dbReference type="GO" id="GO:0046872">
    <property type="term" value="F:metal ion binding"/>
    <property type="evidence" value="ECO:0007669"/>
    <property type="project" value="UniProtKB-KW"/>
</dbReference>
<dbReference type="Gene3D" id="3.40.50.1000">
    <property type="entry name" value="HAD superfamily/HAD-like"/>
    <property type="match status" value="1"/>
</dbReference>
<dbReference type="InterPro" id="IPR005519">
    <property type="entry name" value="Acid_phosphat_B-like"/>
</dbReference>
<dbReference type="InterPro" id="IPR036412">
    <property type="entry name" value="HAD-like_sf"/>
</dbReference>
<dbReference type="InterPro" id="IPR010025">
    <property type="entry name" value="HAD-SF_ppase_IIIB_AphA"/>
</dbReference>
<dbReference type="InterPro" id="IPR023214">
    <property type="entry name" value="HAD_sf"/>
</dbReference>
<dbReference type="NCBIfam" id="TIGR01672">
    <property type="entry name" value="AphA"/>
    <property type="match status" value="1"/>
</dbReference>
<dbReference type="Pfam" id="PF03767">
    <property type="entry name" value="Acid_phosphat_B"/>
    <property type="match status" value="1"/>
</dbReference>
<dbReference type="PIRSF" id="PIRSF017818">
    <property type="entry name" value="Acid_Ptase_B"/>
    <property type="match status" value="1"/>
</dbReference>
<dbReference type="SFLD" id="SFLDG01127">
    <property type="entry name" value="C1.3:_Acid_Phosphatase_Like"/>
    <property type="match status" value="1"/>
</dbReference>
<dbReference type="SFLD" id="SFLDS00003">
    <property type="entry name" value="Haloacid_Dehalogenase"/>
    <property type="match status" value="1"/>
</dbReference>
<dbReference type="SUPFAM" id="SSF56784">
    <property type="entry name" value="HAD-like"/>
    <property type="match status" value="1"/>
</dbReference>